<comment type="function">
    <text evidence="1">Nucleotide-binding protein.</text>
</comment>
<comment type="similarity">
    <text evidence="1">Belongs to the YajQ family.</text>
</comment>
<proteinExistence type="inferred from homology"/>
<protein>
    <recommendedName>
        <fullName evidence="1">Nucleotide-binding protein Cj0374</fullName>
    </recommendedName>
</protein>
<evidence type="ECO:0000255" key="1">
    <source>
        <dbReference type="HAMAP-Rule" id="MF_00632"/>
    </source>
</evidence>
<sequence length="163" mass="18321">MASEHSFDISAALDKQELKNAFEQAKKELDSRYDLKGIKCEIDLSEKESIFKLSSSSEGKLDVLKDIVISKLIKRGINPKAIKELSRESGAMFRLNLKANDAIDSENAKKINKVIKDSKLKVNSSIRGEEIRVAAKQIDDLQAVMKLVKELDLELNISFKNLK</sequence>
<organism>
    <name type="scientific">Campylobacter jejuni subsp. jejuni serotype O:2 (strain ATCC 700819 / NCTC 11168)</name>
    <dbReference type="NCBI Taxonomy" id="192222"/>
    <lineage>
        <taxon>Bacteria</taxon>
        <taxon>Pseudomonadati</taxon>
        <taxon>Campylobacterota</taxon>
        <taxon>Epsilonproteobacteria</taxon>
        <taxon>Campylobacterales</taxon>
        <taxon>Campylobacteraceae</taxon>
        <taxon>Campylobacter</taxon>
    </lineage>
</organism>
<gene>
    <name type="ordered locus">Cj0374</name>
</gene>
<reference key="1">
    <citation type="journal article" date="2000" name="Nature">
        <title>The genome sequence of the food-borne pathogen Campylobacter jejuni reveals hypervariable sequences.</title>
        <authorList>
            <person name="Parkhill J."/>
            <person name="Wren B.W."/>
            <person name="Mungall K.L."/>
            <person name="Ketley J.M."/>
            <person name="Churcher C.M."/>
            <person name="Basham D."/>
            <person name="Chillingworth T."/>
            <person name="Davies R.M."/>
            <person name="Feltwell T."/>
            <person name="Holroyd S."/>
            <person name="Jagels K."/>
            <person name="Karlyshev A.V."/>
            <person name="Moule S."/>
            <person name="Pallen M.J."/>
            <person name="Penn C.W."/>
            <person name="Quail M.A."/>
            <person name="Rajandream M.A."/>
            <person name="Rutherford K.M."/>
            <person name="van Vliet A.H.M."/>
            <person name="Whitehead S."/>
            <person name="Barrell B.G."/>
        </authorList>
    </citation>
    <scope>NUCLEOTIDE SEQUENCE [LARGE SCALE GENOMIC DNA]</scope>
    <source>
        <strain>ATCC 700819 / NCTC 11168</strain>
    </source>
</reference>
<accession>Q9PIC8</accession>
<accession>Q0PBD6</accession>
<feature type="chain" id="PRO_0000106177" description="Nucleotide-binding protein Cj0374">
    <location>
        <begin position="1"/>
        <end position="163"/>
    </location>
</feature>
<name>Y374_CAMJE</name>
<keyword id="KW-0547">Nucleotide-binding</keyword>
<keyword id="KW-1185">Reference proteome</keyword>
<dbReference type="EMBL" id="AL111168">
    <property type="protein sequence ID" value="CAL34524.1"/>
    <property type="molecule type" value="Genomic_DNA"/>
</dbReference>
<dbReference type="PIR" id="D81380">
    <property type="entry name" value="D81380"/>
</dbReference>
<dbReference type="RefSeq" id="WP_002858699.1">
    <property type="nucleotide sequence ID" value="NZ_SZUC01000004.1"/>
</dbReference>
<dbReference type="RefSeq" id="YP_002343811.1">
    <property type="nucleotide sequence ID" value="NC_002163.1"/>
</dbReference>
<dbReference type="SMR" id="Q9PIC8"/>
<dbReference type="IntAct" id="Q9PIC8">
    <property type="interactions" value="18"/>
</dbReference>
<dbReference type="STRING" id="192222.Cj0374"/>
<dbReference type="PaxDb" id="192222-Cj0374"/>
<dbReference type="EnsemblBacteria" id="CAL34524">
    <property type="protein sequence ID" value="CAL34524"/>
    <property type="gene ID" value="Cj0374"/>
</dbReference>
<dbReference type="GeneID" id="904697"/>
<dbReference type="KEGG" id="cje:Cj0374"/>
<dbReference type="PATRIC" id="fig|192222.6.peg.365"/>
<dbReference type="eggNOG" id="COG1666">
    <property type="taxonomic scope" value="Bacteria"/>
</dbReference>
<dbReference type="HOGENOM" id="CLU_099839_1_0_7"/>
<dbReference type="OrthoDB" id="9801447at2"/>
<dbReference type="Proteomes" id="UP000000799">
    <property type="component" value="Chromosome"/>
</dbReference>
<dbReference type="GO" id="GO:0005829">
    <property type="term" value="C:cytosol"/>
    <property type="evidence" value="ECO:0007669"/>
    <property type="project" value="TreeGrafter"/>
</dbReference>
<dbReference type="GO" id="GO:0000166">
    <property type="term" value="F:nucleotide binding"/>
    <property type="evidence" value="ECO:0007669"/>
    <property type="project" value="TreeGrafter"/>
</dbReference>
<dbReference type="CDD" id="cd11740">
    <property type="entry name" value="YajQ_like"/>
    <property type="match status" value="1"/>
</dbReference>
<dbReference type="Gene3D" id="3.30.70.860">
    <property type="match status" value="1"/>
</dbReference>
<dbReference type="Gene3D" id="3.30.70.990">
    <property type="entry name" value="YajQ-like, domain 2"/>
    <property type="match status" value="1"/>
</dbReference>
<dbReference type="HAMAP" id="MF_00632">
    <property type="entry name" value="YajQ"/>
    <property type="match status" value="1"/>
</dbReference>
<dbReference type="InterPro" id="IPR007551">
    <property type="entry name" value="DUF520"/>
</dbReference>
<dbReference type="InterPro" id="IPR035571">
    <property type="entry name" value="UPF0234-like_C"/>
</dbReference>
<dbReference type="InterPro" id="IPR035570">
    <property type="entry name" value="UPF0234_N"/>
</dbReference>
<dbReference type="InterPro" id="IPR036183">
    <property type="entry name" value="YajQ-like_sf"/>
</dbReference>
<dbReference type="NCBIfam" id="NF003819">
    <property type="entry name" value="PRK05412.1"/>
    <property type="match status" value="1"/>
</dbReference>
<dbReference type="PANTHER" id="PTHR30476">
    <property type="entry name" value="UPF0234 PROTEIN YAJQ"/>
    <property type="match status" value="1"/>
</dbReference>
<dbReference type="PANTHER" id="PTHR30476:SF0">
    <property type="entry name" value="UPF0234 PROTEIN YAJQ"/>
    <property type="match status" value="1"/>
</dbReference>
<dbReference type="Pfam" id="PF04461">
    <property type="entry name" value="DUF520"/>
    <property type="match status" value="1"/>
</dbReference>
<dbReference type="SUPFAM" id="SSF89963">
    <property type="entry name" value="YajQ-like"/>
    <property type="match status" value="2"/>
</dbReference>